<proteinExistence type="predicted"/>
<sequence length="149" mass="16870">MGRICPVNSRARRLRARPGRPSGDSLPYHQLQGGAPRLWSPDPGRPAAYRRAHVCDVTAPRWGSTSRQGEGAVLQRMLRRRAPPSWSRDHAYSRRGWENVALFLNRKRKQEGTENTSICCRPESALACGGNLSPQFLKKVIQIQTQELW</sequence>
<gene>
    <name type="primary">DSCR9</name>
</gene>
<reference key="1">
    <citation type="journal article" date="2002" name="DNA Res.">
        <title>Identification of two novel primate-specific genes in DSCR.</title>
        <authorList>
            <person name="Takamatsu K."/>
            <person name="Maekawa K."/>
            <person name="Togashi T."/>
            <person name="Choi D.K."/>
            <person name="Suzuki Y."/>
            <person name="Taylor T.D."/>
            <person name="Toyoda A."/>
            <person name="Sugano S."/>
            <person name="Fujiyama A."/>
            <person name="Hattori M."/>
            <person name="Sakaki Y."/>
            <person name="Takeda T."/>
        </authorList>
    </citation>
    <scope>NUCLEOTIDE SEQUENCE [GENOMIC DNA]</scope>
</reference>
<protein>
    <recommendedName>
        <fullName>Down syndrome critical region protein 9</fullName>
    </recommendedName>
</protein>
<organism>
    <name type="scientific">Pan troglodytes</name>
    <name type="common">Chimpanzee</name>
    <dbReference type="NCBI Taxonomy" id="9598"/>
    <lineage>
        <taxon>Eukaryota</taxon>
        <taxon>Metazoa</taxon>
        <taxon>Chordata</taxon>
        <taxon>Craniata</taxon>
        <taxon>Vertebrata</taxon>
        <taxon>Euteleostomi</taxon>
        <taxon>Mammalia</taxon>
        <taxon>Eutheria</taxon>
        <taxon>Euarchontoglires</taxon>
        <taxon>Primates</taxon>
        <taxon>Haplorrhini</taxon>
        <taxon>Catarrhini</taxon>
        <taxon>Hominidae</taxon>
        <taxon>Pan</taxon>
    </lineage>
</organism>
<name>DSCR9_PANTR</name>
<keyword id="KW-1185">Reference proteome</keyword>
<evidence type="ECO:0000256" key="1">
    <source>
        <dbReference type="SAM" id="MobiDB-lite"/>
    </source>
</evidence>
<dbReference type="RefSeq" id="XP_016794022.1">
    <property type="nucleotide sequence ID" value="XM_016938533.1"/>
</dbReference>
<dbReference type="GeneID" id="750082"/>
<dbReference type="InParanoid" id="P59021"/>
<dbReference type="Proteomes" id="UP000002277">
    <property type="component" value="Unplaced"/>
</dbReference>
<accession>P59021</accession>
<feature type="chain" id="PRO_0000080023" description="Down syndrome critical region protein 9">
    <location>
        <begin position="1"/>
        <end position="149"/>
    </location>
</feature>
<feature type="region of interest" description="Disordered" evidence="1">
    <location>
        <begin position="1"/>
        <end position="41"/>
    </location>
</feature>